<keyword id="KW-0396">Initiation factor</keyword>
<keyword id="KW-0648">Protein biosynthesis</keyword>
<keyword id="KW-1185">Reference proteome</keyword>
<keyword id="KW-0694">RNA-binding</keyword>
<protein>
    <recommendedName>
        <fullName evidence="1">Translation initiation factor 2 subunit alpha</fullName>
    </recommendedName>
    <alternativeName>
        <fullName evidence="1">aIF2-alpha</fullName>
    </alternativeName>
    <alternativeName>
        <fullName evidence="1">eIF-2-alpha</fullName>
    </alternativeName>
</protein>
<gene>
    <name evidence="1" type="primary">eif2a</name>
    <name type="ordered locus">Ta1203</name>
</gene>
<reference key="1">
    <citation type="journal article" date="2000" name="Nature">
        <title>The genome sequence of the thermoacidophilic scavenger Thermoplasma acidophilum.</title>
        <authorList>
            <person name="Ruepp A."/>
            <person name="Graml W."/>
            <person name="Santos-Martinez M.-L."/>
            <person name="Koretke K.K."/>
            <person name="Volker C."/>
            <person name="Mewes H.-W."/>
            <person name="Frishman D."/>
            <person name="Stocker S."/>
            <person name="Lupas A.N."/>
            <person name="Baumeister W."/>
        </authorList>
    </citation>
    <scope>NUCLEOTIDE SEQUENCE [LARGE SCALE GENOMIC DNA]</scope>
    <source>
        <strain>ATCC 25905 / DSM 1728 / JCM 9062 / NBRC 15155 / AMRC-C165</strain>
    </source>
</reference>
<sequence length="254" mass="29052">MNIKPLPDNGDLVVVKITEVKNFGANGVLEEYPGVEGYIHISEVATGWVKHIRSYLREGQRVVCKVIGVNPERKVVDLSLKRVNQHQSREKIAEWKNEQKADKLFEIVCSRLNRNPEECKEQFGRRLVELFGTLFAAFESAAQSNGEWLPEMNGDWKNVFVEIAKENITIPEVSVSGYFEVYSLASDGVERIKEVLTIPEDTGKVELEYVGAPRYRIVVKDKDYKKAEEILKKVVQIVNEKAKKLQVEVEFNKQ</sequence>
<proteinExistence type="inferred from homology"/>
<feature type="chain" id="PRO_0000137404" description="Translation initiation factor 2 subunit alpha">
    <location>
        <begin position="1"/>
        <end position="254"/>
    </location>
</feature>
<feature type="domain" description="S1 motif" evidence="1">
    <location>
        <begin position="10"/>
        <end position="81"/>
    </location>
</feature>
<dbReference type="EMBL" id="AL445066">
    <property type="protein sequence ID" value="CAC12328.1"/>
    <property type="molecule type" value="Genomic_DNA"/>
</dbReference>
<dbReference type="RefSeq" id="WP_010901610.1">
    <property type="nucleotide sequence ID" value="NC_002578.1"/>
</dbReference>
<dbReference type="SMR" id="Q9HIX3"/>
<dbReference type="FunCoup" id="Q9HIX3">
    <property type="interactions" value="227"/>
</dbReference>
<dbReference type="STRING" id="273075.gene:9572426"/>
<dbReference type="PaxDb" id="273075-Ta1203"/>
<dbReference type="EnsemblBacteria" id="CAC12328">
    <property type="protein sequence ID" value="CAC12328"/>
    <property type="gene ID" value="CAC12328"/>
</dbReference>
<dbReference type="KEGG" id="tac:Ta1203"/>
<dbReference type="eggNOG" id="arCOG04107">
    <property type="taxonomic scope" value="Archaea"/>
</dbReference>
<dbReference type="HOGENOM" id="CLU_033458_0_2_2"/>
<dbReference type="InParanoid" id="Q9HIX3"/>
<dbReference type="OrthoDB" id="84794at2157"/>
<dbReference type="Proteomes" id="UP000001024">
    <property type="component" value="Chromosome"/>
</dbReference>
<dbReference type="GO" id="GO:0043022">
    <property type="term" value="F:ribosome binding"/>
    <property type="evidence" value="ECO:0007669"/>
    <property type="project" value="TreeGrafter"/>
</dbReference>
<dbReference type="GO" id="GO:0003723">
    <property type="term" value="F:RNA binding"/>
    <property type="evidence" value="ECO:0007669"/>
    <property type="project" value="UniProtKB-UniRule"/>
</dbReference>
<dbReference type="GO" id="GO:0003743">
    <property type="term" value="F:translation initiation factor activity"/>
    <property type="evidence" value="ECO:0007669"/>
    <property type="project" value="UniProtKB-UniRule"/>
</dbReference>
<dbReference type="CDD" id="cd04452">
    <property type="entry name" value="S1_IF2_alpha"/>
    <property type="match status" value="1"/>
</dbReference>
<dbReference type="Gene3D" id="3.30.70.1130">
    <property type="entry name" value="EIF_2_alpha"/>
    <property type="match status" value="1"/>
</dbReference>
<dbReference type="Gene3D" id="2.40.50.140">
    <property type="entry name" value="Nucleic acid-binding proteins"/>
    <property type="match status" value="1"/>
</dbReference>
<dbReference type="Gene3D" id="1.10.150.190">
    <property type="entry name" value="Translation initiation factor 2, subunit 1, domain 2"/>
    <property type="match status" value="1"/>
</dbReference>
<dbReference type="HAMAP" id="MF_00231">
    <property type="entry name" value="eIF_2_alpha"/>
    <property type="match status" value="1"/>
</dbReference>
<dbReference type="InterPro" id="IPR012340">
    <property type="entry name" value="NA-bd_OB-fold"/>
</dbReference>
<dbReference type="InterPro" id="IPR003029">
    <property type="entry name" value="S1_domain"/>
</dbReference>
<dbReference type="InterPro" id="IPR044126">
    <property type="entry name" value="S1_IF2_alpha"/>
</dbReference>
<dbReference type="InterPro" id="IPR022964">
    <property type="entry name" value="TIF2_asu_arc"/>
</dbReference>
<dbReference type="InterPro" id="IPR024055">
    <property type="entry name" value="TIF2_asu_C"/>
</dbReference>
<dbReference type="InterPro" id="IPR024054">
    <property type="entry name" value="TIF2_asu_middle_sf"/>
</dbReference>
<dbReference type="InterPro" id="IPR011488">
    <property type="entry name" value="TIF_2_asu"/>
</dbReference>
<dbReference type="NCBIfam" id="NF003062">
    <property type="entry name" value="PRK03987.1-1"/>
    <property type="match status" value="1"/>
</dbReference>
<dbReference type="NCBIfam" id="NF003064">
    <property type="entry name" value="PRK03987.1-4"/>
    <property type="match status" value="1"/>
</dbReference>
<dbReference type="PANTHER" id="PTHR10602">
    <property type="entry name" value="EUKARYOTIC TRANSLATION INITIATION FACTOR 2 SUBUNIT 1"/>
    <property type="match status" value="1"/>
</dbReference>
<dbReference type="PANTHER" id="PTHR10602:SF0">
    <property type="entry name" value="EUKARYOTIC TRANSLATION INITIATION FACTOR 2 SUBUNIT 1"/>
    <property type="match status" value="1"/>
</dbReference>
<dbReference type="Pfam" id="PF07541">
    <property type="entry name" value="EIF_2_alpha"/>
    <property type="match status" value="1"/>
</dbReference>
<dbReference type="Pfam" id="PF00575">
    <property type="entry name" value="S1"/>
    <property type="match status" value="1"/>
</dbReference>
<dbReference type="SMART" id="SM00316">
    <property type="entry name" value="S1"/>
    <property type="match status" value="1"/>
</dbReference>
<dbReference type="SUPFAM" id="SSF110993">
    <property type="entry name" value="eIF-2-alpha, C-terminal domain"/>
    <property type="match status" value="1"/>
</dbReference>
<dbReference type="SUPFAM" id="SSF116742">
    <property type="entry name" value="eIF2alpha middle domain-like"/>
    <property type="match status" value="1"/>
</dbReference>
<dbReference type="SUPFAM" id="SSF50249">
    <property type="entry name" value="Nucleic acid-binding proteins"/>
    <property type="match status" value="1"/>
</dbReference>
<dbReference type="PROSITE" id="PS50126">
    <property type="entry name" value="S1"/>
    <property type="match status" value="1"/>
</dbReference>
<comment type="function">
    <text evidence="1">eIF-2 functions in the early steps of protein synthesis by forming a ternary complex with GTP and initiator tRNA.</text>
</comment>
<comment type="subunit">
    <text evidence="1">Heterotrimer composed of an alpha, a beta and a gamma chain.</text>
</comment>
<comment type="similarity">
    <text evidence="1">Belongs to the eIF-2-alpha family.</text>
</comment>
<evidence type="ECO:0000255" key="1">
    <source>
        <dbReference type="HAMAP-Rule" id="MF_00231"/>
    </source>
</evidence>
<accession>Q9HIX3</accession>
<name>IF2A_THEAC</name>
<organism>
    <name type="scientific">Thermoplasma acidophilum (strain ATCC 25905 / DSM 1728 / JCM 9062 / NBRC 15155 / AMRC-C165)</name>
    <dbReference type="NCBI Taxonomy" id="273075"/>
    <lineage>
        <taxon>Archaea</taxon>
        <taxon>Methanobacteriati</taxon>
        <taxon>Thermoplasmatota</taxon>
        <taxon>Thermoplasmata</taxon>
        <taxon>Thermoplasmatales</taxon>
        <taxon>Thermoplasmataceae</taxon>
        <taxon>Thermoplasma</taxon>
    </lineage>
</organism>